<keyword id="KW-0025">Alternative splicing</keyword>
<keyword id="KW-1267">Proteomics identification</keyword>
<keyword id="KW-1185">Reference proteome</keyword>
<comment type="function">
    <text>Does not have a catalytic activity.</text>
</comment>
<comment type="alternative products">
    <event type="alternative splicing"/>
    <isoform>
        <id>Q9NS85-1</id>
        <name>1</name>
        <sequence type="displayed"/>
    </isoform>
    <isoform>
        <id>Q9NS85-2</id>
        <name>2</name>
        <sequence type="described" ref="VSP_056940"/>
    </isoform>
</comment>
<comment type="tissue specificity">
    <text evidence="2">Strong expression in brain and central nervous system.</text>
</comment>
<comment type="developmental stage">
    <text>Not expressed in fetal brain.</text>
</comment>
<comment type="similarity">
    <text evidence="4">Belongs to the alpha-carbonic anhydrase family.</text>
</comment>
<gene>
    <name type="primary">CA10</name>
    <name type="ORF">hucep-15</name>
    <name type="ORF">UNQ533/PRO1076</name>
</gene>
<sequence length="328" mass="37563">MEIVWEVLFLLQANFIVCISAQQNSPKIHEGWWAYKEVVQGSFVPVPSFWGLVNSAWNLCSVGKRQSPVNIETSHMIFDPFLTPLRINTGGRKVSGTMYNTGRHVSLRLDKEHLVNISGGPMTYSHRLEEIRLHFGSEDSQGSEHLLNGQAFSGEVQLIHYNHELYTNVTEAAKSPNGLVVVSIFIKVSDSSNPFLNRMLNRDTITRITYKNDAYLLQGLNIEELYPETSSFITYDGSMTIPPCYETASWIIMNKPVYITRMQMHSLRLLSQNQPSQIFLSMSDNFRPVQPLNNRCIRTNINFSLQGKDCPNNRAQKLQYRVNEWLLK</sequence>
<evidence type="ECO:0000255" key="1">
    <source>
        <dbReference type="PROSITE-ProRule" id="PRU01134"/>
    </source>
</evidence>
<evidence type="ECO:0000269" key="2">
    <source>
    </source>
</evidence>
<evidence type="ECO:0000303" key="3">
    <source>
    </source>
</evidence>
<evidence type="ECO:0000305" key="4"/>
<accession>Q9NS85</accession>
<accession>B2R7J0</accession>
<accession>B4DGL6</accession>
<reference key="1">
    <citation type="journal article" date="2001" name="Biochim. Biophys. Acta">
        <title>cDNA sequence of human carbonic anhydrase-related protein, CA-RP X: mRNA expressions of CA-RP X and XI in human brain.</title>
        <authorList>
            <person name="Okamoto N."/>
            <person name="Fujikawa-Adachi K."/>
            <person name="Nishimori I."/>
            <person name="Taniuchi K."/>
            <person name="Onishi S."/>
        </authorList>
    </citation>
    <scope>NUCLEOTIDE SEQUENCE [MRNA] (ISOFORM 1)</scope>
    <scope>TISSUE SPECIFICITY</scope>
</reference>
<reference key="2">
    <citation type="submission" date="2000-07" db="EMBL/GenBank/DDBJ databases">
        <title>Structure and expression of the human CA10 gene: evolution of the highly conserved alpha-carbonic anhydrase-related proteins, CA-RP X and CA-RP XI.</title>
        <authorList>
            <person name="Hewett-Emmett D."/>
            <person name="Shimmin L.C."/>
            <person name="Wiebauer K."/>
            <person name="Tashian R.E."/>
            <person name="Porter C.A."/>
        </authorList>
    </citation>
    <scope>NUCLEOTIDE SEQUENCE [MRNA] (ISOFORM 1)</scope>
    <source>
        <tissue>Frontal cortex</tissue>
    </source>
</reference>
<reference key="3">
    <citation type="submission" date="1997-03" db="EMBL/GenBank/DDBJ databases">
        <title>Molecular cloning of a gene expressed in human cerebral cortex.</title>
        <authorList>
            <person name="Yoshimoto M."/>
            <person name="Yazaki M."/>
            <person name="Takayama K."/>
            <person name="Matsumoto K."/>
            <person name="Tsuritani K."/>
        </authorList>
    </citation>
    <scope>NUCLEOTIDE SEQUENCE [MRNA] (ISOFORM 1)</scope>
    <source>
        <tissue>Brain</tissue>
    </source>
</reference>
<reference key="4">
    <citation type="journal article" date="1998" name="Hum. Genet.">
        <title>CCG repeats in cDNAs from human brain.</title>
        <authorList>
            <person name="Kleiderlein J.J."/>
            <person name="Nisson P.E."/>
            <person name="Jessee J."/>
            <person name="Li W.B."/>
            <person name="Becker K.G."/>
            <person name="Derby M.L."/>
            <person name="Ross C.A."/>
            <person name="Margolis R.L."/>
        </authorList>
    </citation>
    <scope>NUCLEOTIDE SEQUENCE [MRNA] (ISOFORM 1)</scope>
</reference>
<reference key="5">
    <citation type="journal article" date="2001" name="Genome Res.">
        <title>Towards a catalog of human genes and proteins: sequencing and analysis of 500 novel complete protein coding human cDNAs.</title>
        <authorList>
            <person name="Wiemann S."/>
            <person name="Weil B."/>
            <person name="Wellenreuther R."/>
            <person name="Gassenhuber J."/>
            <person name="Glassl S."/>
            <person name="Ansorge W."/>
            <person name="Boecher M."/>
            <person name="Bloecker H."/>
            <person name="Bauersachs S."/>
            <person name="Blum H."/>
            <person name="Lauber J."/>
            <person name="Duesterhoeft A."/>
            <person name="Beyer A."/>
            <person name="Koehrer K."/>
            <person name="Strack N."/>
            <person name="Mewes H.-W."/>
            <person name="Ottenwaelder B."/>
            <person name="Obermaier B."/>
            <person name="Tampe J."/>
            <person name="Heubner D."/>
            <person name="Wambutt R."/>
            <person name="Korn B."/>
            <person name="Klein M."/>
            <person name="Poustka A."/>
        </authorList>
    </citation>
    <scope>NUCLEOTIDE SEQUENCE [LARGE SCALE MRNA] (ISOFORM 1)</scope>
    <source>
        <tissue>Amygdala</tissue>
    </source>
</reference>
<reference key="6">
    <citation type="journal article" date="2003" name="Genome Res.">
        <title>The secreted protein discovery initiative (SPDI), a large-scale effort to identify novel human secreted and transmembrane proteins: a bioinformatics assessment.</title>
        <authorList>
            <person name="Clark H.F."/>
            <person name="Gurney A.L."/>
            <person name="Abaya E."/>
            <person name="Baker K."/>
            <person name="Baldwin D.T."/>
            <person name="Brush J."/>
            <person name="Chen J."/>
            <person name="Chow B."/>
            <person name="Chui C."/>
            <person name="Crowley C."/>
            <person name="Currell B."/>
            <person name="Deuel B."/>
            <person name="Dowd P."/>
            <person name="Eaton D."/>
            <person name="Foster J.S."/>
            <person name="Grimaldi C."/>
            <person name="Gu Q."/>
            <person name="Hass P.E."/>
            <person name="Heldens S."/>
            <person name="Huang A."/>
            <person name="Kim H.S."/>
            <person name="Klimowski L."/>
            <person name="Jin Y."/>
            <person name="Johnson S."/>
            <person name="Lee J."/>
            <person name="Lewis L."/>
            <person name="Liao D."/>
            <person name="Mark M.R."/>
            <person name="Robbie E."/>
            <person name="Sanchez C."/>
            <person name="Schoenfeld J."/>
            <person name="Seshagiri S."/>
            <person name="Simmons L."/>
            <person name="Singh J."/>
            <person name="Smith V."/>
            <person name="Stinson J."/>
            <person name="Vagts A."/>
            <person name="Vandlen R.L."/>
            <person name="Watanabe C."/>
            <person name="Wieand D."/>
            <person name="Woods K."/>
            <person name="Xie M.-H."/>
            <person name="Yansura D.G."/>
            <person name="Yi S."/>
            <person name="Yu G."/>
            <person name="Yuan J."/>
            <person name="Zhang M."/>
            <person name="Zhang Z."/>
            <person name="Goddard A.D."/>
            <person name="Wood W.I."/>
            <person name="Godowski P.J."/>
            <person name="Gray A.M."/>
        </authorList>
    </citation>
    <scope>NUCLEOTIDE SEQUENCE [LARGE SCALE MRNA] (ISOFORM 1)</scope>
</reference>
<reference key="7">
    <citation type="journal article" date="2004" name="Nat. Genet.">
        <title>Complete sequencing and characterization of 21,243 full-length human cDNAs.</title>
        <authorList>
            <person name="Ota T."/>
            <person name="Suzuki Y."/>
            <person name="Nishikawa T."/>
            <person name="Otsuki T."/>
            <person name="Sugiyama T."/>
            <person name="Irie R."/>
            <person name="Wakamatsu A."/>
            <person name="Hayashi K."/>
            <person name="Sato H."/>
            <person name="Nagai K."/>
            <person name="Kimura K."/>
            <person name="Makita H."/>
            <person name="Sekine M."/>
            <person name="Obayashi M."/>
            <person name="Nishi T."/>
            <person name="Shibahara T."/>
            <person name="Tanaka T."/>
            <person name="Ishii S."/>
            <person name="Yamamoto J."/>
            <person name="Saito K."/>
            <person name="Kawai Y."/>
            <person name="Isono Y."/>
            <person name="Nakamura Y."/>
            <person name="Nagahari K."/>
            <person name="Murakami K."/>
            <person name="Yasuda T."/>
            <person name="Iwayanagi T."/>
            <person name="Wagatsuma M."/>
            <person name="Shiratori A."/>
            <person name="Sudo H."/>
            <person name="Hosoiri T."/>
            <person name="Kaku Y."/>
            <person name="Kodaira H."/>
            <person name="Kondo H."/>
            <person name="Sugawara M."/>
            <person name="Takahashi M."/>
            <person name="Kanda K."/>
            <person name="Yokoi T."/>
            <person name="Furuya T."/>
            <person name="Kikkawa E."/>
            <person name="Omura Y."/>
            <person name="Abe K."/>
            <person name="Kamihara K."/>
            <person name="Katsuta N."/>
            <person name="Sato K."/>
            <person name="Tanikawa M."/>
            <person name="Yamazaki M."/>
            <person name="Ninomiya K."/>
            <person name="Ishibashi T."/>
            <person name="Yamashita H."/>
            <person name="Murakawa K."/>
            <person name="Fujimori K."/>
            <person name="Tanai H."/>
            <person name="Kimata M."/>
            <person name="Watanabe M."/>
            <person name="Hiraoka S."/>
            <person name="Chiba Y."/>
            <person name="Ishida S."/>
            <person name="Ono Y."/>
            <person name="Takiguchi S."/>
            <person name="Watanabe S."/>
            <person name="Yosida M."/>
            <person name="Hotuta T."/>
            <person name="Kusano J."/>
            <person name="Kanehori K."/>
            <person name="Takahashi-Fujii A."/>
            <person name="Hara H."/>
            <person name="Tanase T.-O."/>
            <person name="Nomura Y."/>
            <person name="Togiya S."/>
            <person name="Komai F."/>
            <person name="Hara R."/>
            <person name="Takeuchi K."/>
            <person name="Arita M."/>
            <person name="Imose N."/>
            <person name="Musashino K."/>
            <person name="Yuuki H."/>
            <person name="Oshima A."/>
            <person name="Sasaki N."/>
            <person name="Aotsuka S."/>
            <person name="Yoshikawa Y."/>
            <person name="Matsunawa H."/>
            <person name="Ichihara T."/>
            <person name="Shiohata N."/>
            <person name="Sano S."/>
            <person name="Moriya S."/>
            <person name="Momiyama H."/>
            <person name="Satoh N."/>
            <person name="Takami S."/>
            <person name="Terashima Y."/>
            <person name="Suzuki O."/>
            <person name="Nakagawa S."/>
            <person name="Senoh A."/>
            <person name="Mizoguchi H."/>
            <person name="Goto Y."/>
            <person name="Shimizu F."/>
            <person name="Wakebe H."/>
            <person name="Hishigaki H."/>
            <person name="Watanabe T."/>
            <person name="Sugiyama A."/>
            <person name="Takemoto M."/>
            <person name="Kawakami B."/>
            <person name="Yamazaki M."/>
            <person name="Watanabe K."/>
            <person name="Kumagai A."/>
            <person name="Itakura S."/>
            <person name="Fukuzumi Y."/>
            <person name="Fujimori Y."/>
            <person name="Komiyama M."/>
            <person name="Tashiro H."/>
            <person name="Tanigami A."/>
            <person name="Fujiwara T."/>
            <person name="Ono T."/>
            <person name="Yamada K."/>
            <person name="Fujii Y."/>
            <person name="Ozaki K."/>
            <person name="Hirao M."/>
            <person name="Ohmori Y."/>
            <person name="Kawabata A."/>
            <person name="Hikiji T."/>
            <person name="Kobatake N."/>
            <person name="Inagaki H."/>
            <person name="Ikema Y."/>
            <person name="Okamoto S."/>
            <person name="Okitani R."/>
            <person name="Kawakami T."/>
            <person name="Noguchi S."/>
            <person name="Itoh T."/>
            <person name="Shigeta K."/>
            <person name="Senba T."/>
            <person name="Matsumura K."/>
            <person name="Nakajima Y."/>
            <person name="Mizuno T."/>
            <person name="Morinaga M."/>
            <person name="Sasaki M."/>
            <person name="Togashi T."/>
            <person name="Oyama M."/>
            <person name="Hata H."/>
            <person name="Watanabe M."/>
            <person name="Komatsu T."/>
            <person name="Mizushima-Sugano J."/>
            <person name="Satoh T."/>
            <person name="Shirai Y."/>
            <person name="Takahashi Y."/>
            <person name="Nakagawa K."/>
            <person name="Okumura K."/>
            <person name="Nagase T."/>
            <person name="Nomura N."/>
            <person name="Kikuchi H."/>
            <person name="Masuho Y."/>
            <person name="Yamashita R."/>
            <person name="Nakai K."/>
            <person name="Yada T."/>
            <person name="Nakamura Y."/>
            <person name="Ohara O."/>
            <person name="Isogai T."/>
            <person name="Sugano S."/>
        </authorList>
    </citation>
    <scope>NUCLEOTIDE SEQUENCE [LARGE SCALE MRNA] (ISOFORMS 1 AND 2)</scope>
    <source>
        <tissue>Brain</tissue>
        <tissue>Cerebellum</tissue>
    </source>
</reference>
<reference key="8">
    <citation type="journal article" date="2006" name="Nature">
        <title>DNA sequence of human chromosome 17 and analysis of rearrangement in the human lineage.</title>
        <authorList>
            <person name="Zody M.C."/>
            <person name="Garber M."/>
            <person name="Adams D.J."/>
            <person name="Sharpe T."/>
            <person name="Harrow J."/>
            <person name="Lupski J.R."/>
            <person name="Nicholson C."/>
            <person name="Searle S.M."/>
            <person name="Wilming L."/>
            <person name="Young S.K."/>
            <person name="Abouelleil A."/>
            <person name="Allen N.R."/>
            <person name="Bi W."/>
            <person name="Bloom T."/>
            <person name="Borowsky M.L."/>
            <person name="Bugalter B.E."/>
            <person name="Butler J."/>
            <person name="Chang J.L."/>
            <person name="Chen C.-K."/>
            <person name="Cook A."/>
            <person name="Corum B."/>
            <person name="Cuomo C.A."/>
            <person name="de Jong P.J."/>
            <person name="DeCaprio D."/>
            <person name="Dewar K."/>
            <person name="FitzGerald M."/>
            <person name="Gilbert J."/>
            <person name="Gibson R."/>
            <person name="Gnerre S."/>
            <person name="Goldstein S."/>
            <person name="Grafham D.V."/>
            <person name="Grocock R."/>
            <person name="Hafez N."/>
            <person name="Hagopian D.S."/>
            <person name="Hart E."/>
            <person name="Norman C.H."/>
            <person name="Humphray S."/>
            <person name="Jaffe D.B."/>
            <person name="Jones M."/>
            <person name="Kamal M."/>
            <person name="Khodiyar V.K."/>
            <person name="LaButti K."/>
            <person name="Laird G."/>
            <person name="Lehoczky J."/>
            <person name="Liu X."/>
            <person name="Lokyitsang T."/>
            <person name="Loveland J."/>
            <person name="Lui A."/>
            <person name="Macdonald P."/>
            <person name="Major J.E."/>
            <person name="Matthews L."/>
            <person name="Mauceli E."/>
            <person name="McCarroll S.A."/>
            <person name="Mihalev A.H."/>
            <person name="Mudge J."/>
            <person name="Nguyen C."/>
            <person name="Nicol R."/>
            <person name="O'Leary S.B."/>
            <person name="Osoegawa K."/>
            <person name="Schwartz D.C."/>
            <person name="Shaw-Smith C."/>
            <person name="Stankiewicz P."/>
            <person name="Steward C."/>
            <person name="Swarbreck D."/>
            <person name="Venkataraman V."/>
            <person name="Whittaker C.A."/>
            <person name="Yang X."/>
            <person name="Zimmer A.R."/>
            <person name="Bradley A."/>
            <person name="Hubbard T."/>
            <person name="Birren B.W."/>
            <person name="Rogers J."/>
            <person name="Lander E.S."/>
            <person name="Nusbaum C."/>
        </authorList>
    </citation>
    <scope>NUCLEOTIDE SEQUENCE [LARGE SCALE GENOMIC DNA]</scope>
</reference>
<reference key="9">
    <citation type="submission" date="2005-09" db="EMBL/GenBank/DDBJ databases">
        <authorList>
            <person name="Mural R.J."/>
            <person name="Istrail S."/>
            <person name="Sutton G.G."/>
            <person name="Florea L."/>
            <person name="Halpern A.L."/>
            <person name="Mobarry C.M."/>
            <person name="Lippert R."/>
            <person name="Walenz B."/>
            <person name="Shatkay H."/>
            <person name="Dew I."/>
            <person name="Miller J.R."/>
            <person name="Flanigan M.J."/>
            <person name="Edwards N.J."/>
            <person name="Bolanos R."/>
            <person name="Fasulo D."/>
            <person name="Halldorsson B.V."/>
            <person name="Hannenhalli S."/>
            <person name="Turner R."/>
            <person name="Yooseph S."/>
            <person name="Lu F."/>
            <person name="Nusskern D.R."/>
            <person name="Shue B.C."/>
            <person name="Zheng X.H."/>
            <person name="Zhong F."/>
            <person name="Delcher A.L."/>
            <person name="Huson D.H."/>
            <person name="Kravitz S.A."/>
            <person name="Mouchard L."/>
            <person name="Reinert K."/>
            <person name="Remington K.A."/>
            <person name="Clark A.G."/>
            <person name="Waterman M.S."/>
            <person name="Eichler E.E."/>
            <person name="Adams M.D."/>
            <person name="Hunkapiller M.W."/>
            <person name="Myers E.W."/>
            <person name="Venter J.C."/>
        </authorList>
    </citation>
    <scope>NUCLEOTIDE SEQUENCE [LARGE SCALE GENOMIC DNA]</scope>
</reference>
<reference key="10">
    <citation type="journal article" date="2004" name="Genome Res.">
        <title>The status, quality, and expansion of the NIH full-length cDNA project: the Mammalian Gene Collection (MGC).</title>
        <authorList>
            <consortium name="The MGC Project Team"/>
        </authorList>
    </citation>
    <scope>NUCLEOTIDE SEQUENCE [LARGE SCALE MRNA] (ISOFORM 1)</scope>
    <source>
        <tissue>Brain</tissue>
    </source>
</reference>
<protein>
    <recommendedName>
        <fullName>Carbonic anhydrase-related protein 10</fullName>
    </recommendedName>
    <alternativeName>
        <fullName>Carbonic anhydrase-related protein X</fullName>
        <shortName>CA-RP X</shortName>
        <shortName>CARP X</shortName>
    </alternativeName>
    <alternativeName>
        <fullName>Cerebral protein 15</fullName>
    </alternativeName>
</protein>
<dbReference type="EMBL" id="AB036836">
    <property type="protein sequence ID" value="BAB00615.1"/>
    <property type="molecule type" value="mRNA"/>
</dbReference>
<dbReference type="EMBL" id="AF288385">
    <property type="protein sequence ID" value="AAK11974.1"/>
    <property type="molecule type" value="mRNA"/>
</dbReference>
<dbReference type="EMBL" id="AB001597">
    <property type="protein sequence ID" value="BAB46928.1"/>
    <property type="molecule type" value="mRNA"/>
</dbReference>
<dbReference type="EMBL" id="AF064854">
    <property type="status" value="NOT_ANNOTATED_CDS"/>
    <property type="molecule type" value="mRNA"/>
</dbReference>
<dbReference type="EMBL" id="AL161812">
    <property type="protein sequence ID" value="CAB82105.1"/>
    <property type="molecule type" value="mRNA"/>
</dbReference>
<dbReference type="EMBL" id="AY358509">
    <property type="protein sequence ID" value="AAQ88873.1"/>
    <property type="molecule type" value="mRNA"/>
</dbReference>
<dbReference type="EMBL" id="AK294652">
    <property type="protein sequence ID" value="BAG57827.1"/>
    <property type="molecule type" value="mRNA"/>
</dbReference>
<dbReference type="EMBL" id="AK313001">
    <property type="protein sequence ID" value="BAG35837.1"/>
    <property type="molecule type" value="mRNA"/>
</dbReference>
<dbReference type="EMBL" id="AC002090">
    <property type="status" value="NOT_ANNOTATED_CDS"/>
    <property type="molecule type" value="Genomic_DNA"/>
</dbReference>
<dbReference type="EMBL" id="AC004108">
    <property type="status" value="NOT_ANNOTATED_CDS"/>
    <property type="molecule type" value="Genomic_DNA"/>
</dbReference>
<dbReference type="EMBL" id="AC005883">
    <property type="status" value="NOT_ANNOTATED_CDS"/>
    <property type="molecule type" value="Genomic_DNA"/>
</dbReference>
<dbReference type="EMBL" id="AC006083">
    <property type="status" value="NOT_ANNOTATED_CDS"/>
    <property type="molecule type" value="Genomic_DNA"/>
</dbReference>
<dbReference type="EMBL" id="AC016473">
    <property type="status" value="NOT_ANNOTATED_CDS"/>
    <property type="molecule type" value="Genomic_DNA"/>
</dbReference>
<dbReference type="EMBL" id="AC092713">
    <property type="status" value="NOT_ANNOTATED_CDS"/>
    <property type="molecule type" value="Genomic_DNA"/>
</dbReference>
<dbReference type="EMBL" id="CH471109">
    <property type="protein sequence ID" value="EAW94558.1"/>
    <property type="molecule type" value="Genomic_DNA"/>
</dbReference>
<dbReference type="EMBL" id="BC020577">
    <property type="protein sequence ID" value="AAH20577.1"/>
    <property type="molecule type" value="mRNA"/>
</dbReference>
<dbReference type="EMBL" id="BC047456">
    <property type="protein sequence ID" value="AAH47456.1"/>
    <property type="molecule type" value="mRNA"/>
</dbReference>
<dbReference type="EMBL" id="BC068462">
    <property type="protein sequence ID" value="AAH68462.1"/>
    <property type="molecule type" value="mRNA"/>
</dbReference>
<dbReference type="CCDS" id="CCDS32684.1">
    <molecule id="Q9NS85-1"/>
</dbReference>
<dbReference type="RefSeq" id="NP_001076002.1">
    <molecule id="Q9NS85-1"/>
    <property type="nucleotide sequence ID" value="NM_001082533.1"/>
</dbReference>
<dbReference type="RefSeq" id="NP_001076003.1">
    <molecule id="Q9NS85-1"/>
    <property type="nucleotide sequence ID" value="NM_001082534.2"/>
</dbReference>
<dbReference type="RefSeq" id="NP_064563.1">
    <molecule id="Q9NS85-1"/>
    <property type="nucleotide sequence ID" value="NM_020178.5"/>
</dbReference>
<dbReference type="SMR" id="Q9NS85"/>
<dbReference type="BioGRID" id="121259">
    <property type="interactions" value="49"/>
</dbReference>
<dbReference type="FunCoup" id="Q9NS85">
    <property type="interactions" value="42"/>
</dbReference>
<dbReference type="IntAct" id="Q9NS85">
    <property type="interactions" value="43"/>
</dbReference>
<dbReference type="MINT" id="Q9NS85"/>
<dbReference type="STRING" id="9606.ENSP00000405388"/>
<dbReference type="DrugBank" id="DB00909">
    <property type="generic name" value="Zonisamide"/>
</dbReference>
<dbReference type="iPTMnet" id="Q9NS85"/>
<dbReference type="PhosphoSitePlus" id="Q9NS85"/>
<dbReference type="BioMuta" id="CA10"/>
<dbReference type="DMDM" id="18203320"/>
<dbReference type="jPOST" id="Q9NS85"/>
<dbReference type="MassIVE" id="Q9NS85"/>
<dbReference type="PaxDb" id="9606-ENSP00000405388"/>
<dbReference type="PeptideAtlas" id="Q9NS85"/>
<dbReference type="ProteomicsDB" id="4142"/>
<dbReference type="ProteomicsDB" id="82509">
    <molecule id="Q9NS85-1"/>
</dbReference>
<dbReference type="Antibodypedia" id="30804">
    <property type="antibodies" value="193 antibodies from 27 providers"/>
</dbReference>
<dbReference type="DNASU" id="56934"/>
<dbReference type="Ensembl" id="ENST00000285273.8">
    <molecule id="Q9NS85-1"/>
    <property type="protein sequence ID" value="ENSP00000285273.4"/>
    <property type="gene ID" value="ENSG00000154975.14"/>
</dbReference>
<dbReference type="Ensembl" id="ENST00000442502.6">
    <molecule id="Q9NS85-1"/>
    <property type="protein sequence ID" value="ENSP00000390666.2"/>
    <property type="gene ID" value="ENSG00000154975.14"/>
</dbReference>
<dbReference type="Ensembl" id="ENST00000451037.7">
    <molecule id="Q9NS85-1"/>
    <property type="protein sequence ID" value="ENSP00000405388.2"/>
    <property type="gene ID" value="ENSG00000154975.14"/>
</dbReference>
<dbReference type="Ensembl" id="ENST00000570565.5">
    <molecule id="Q9NS85-2"/>
    <property type="protein sequence ID" value="ENSP00000459619.1"/>
    <property type="gene ID" value="ENSG00000154975.14"/>
</dbReference>
<dbReference type="GeneID" id="56934"/>
<dbReference type="KEGG" id="hsa:56934"/>
<dbReference type="MANE-Select" id="ENST00000451037.7">
    <property type="protein sequence ID" value="ENSP00000405388.2"/>
    <property type="RefSeq nucleotide sequence ID" value="NM_020178.5"/>
    <property type="RefSeq protein sequence ID" value="NP_064563.1"/>
</dbReference>
<dbReference type="UCSC" id="uc002itw.5">
    <molecule id="Q9NS85-1"/>
    <property type="organism name" value="human"/>
</dbReference>
<dbReference type="AGR" id="HGNC:1369"/>
<dbReference type="CTD" id="56934"/>
<dbReference type="DisGeNET" id="56934"/>
<dbReference type="GeneCards" id="CA10"/>
<dbReference type="HGNC" id="HGNC:1369">
    <property type="gene designation" value="CA10"/>
</dbReference>
<dbReference type="HPA" id="ENSG00000154975">
    <property type="expression patterns" value="Tissue enhanced (brain, retina)"/>
</dbReference>
<dbReference type="MIM" id="604642">
    <property type="type" value="gene"/>
</dbReference>
<dbReference type="neXtProt" id="NX_Q9NS85"/>
<dbReference type="OpenTargets" id="ENSG00000154975"/>
<dbReference type="PharmGKB" id="PA25985"/>
<dbReference type="VEuPathDB" id="HostDB:ENSG00000154975"/>
<dbReference type="eggNOG" id="KOG0382">
    <property type="taxonomic scope" value="Eukaryota"/>
</dbReference>
<dbReference type="GeneTree" id="ENSGT00940000155223"/>
<dbReference type="HOGENOM" id="CLU_039326_7_1_1"/>
<dbReference type="InParanoid" id="Q9NS85"/>
<dbReference type="OMA" id="MYYQANT"/>
<dbReference type="OrthoDB" id="5978072at2759"/>
<dbReference type="PAN-GO" id="Q9NS85">
    <property type="GO annotations" value="2 GO annotations based on evolutionary models"/>
</dbReference>
<dbReference type="PhylomeDB" id="Q9NS85"/>
<dbReference type="TreeFam" id="TF352926"/>
<dbReference type="PathwayCommons" id="Q9NS85"/>
<dbReference type="SignaLink" id="Q9NS85"/>
<dbReference type="BioGRID-ORCS" id="56934">
    <property type="hits" value="14 hits in 1149 CRISPR screens"/>
</dbReference>
<dbReference type="ChiTaRS" id="CA10">
    <property type="organism name" value="human"/>
</dbReference>
<dbReference type="GeneWiki" id="CA10"/>
<dbReference type="GenomeRNAi" id="56934"/>
<dbReference type="Pharos" id="Q9NS85">
    <property type="development level" value="Tbio"/>
</dbReference>
<dbReference type="PRO" id="PR:Q9NS85"/>
<dbReference type="Proteomes" id="UP000005640">
    <property type="component" value="Chromosome 17"/>
</dbReference>
<dbReference type="RNAct" id="Q9NS85">
    <property type="molecule type" value="protein"/>
</dbReference>
<dbReference type="Bgee" id="ENSG00000154975">
    <property type="expression patterns" value="Expressed in cerebellar cortex and 124 other cell types or tissues"/>
</dbReference>
<dbReference type="ExpressionAtlas" id="Q9NS85">
    <property type="expression patterns" value="baseline and differential"/>
</dbReference>
<dbReference type="GO" id="GO:0004089">
    <property type="term" value="F:carbonate dehydratase activity"/>
    <property type="evidence" value="ECO:0007669"/>
    <property type="project" value="InterPro"/>
</dbReference>
<dbReference type="GO" id="GO:0016836">
    <property type="term" value="F:hydro-lyase activity"/>
    <property type="evidence" value="ECO:0000318"/>
    <property type="project" value="GO_Central"/>
</dbReference>
<dbReference type="GO" id="GO:0008270">
    <property type="term" value="F:zinc ion binding"/>
    <property type="evidence" value="ECO:0007669"/>
    <property type="project" value="InterPro"/>
</dbReference>
<dbReference type="GO" id="GO:0007420">
    <property type="term" value="P:brain development"/>
    <property type="evidence" value="ECO:0000303"/>
    <property type="project" value="UniProtKB"/>
</dbReference>
<dbReference type="CDD" id="cd03121">
    <property type="entry name" value="alpha_CARP_X_XI_like"/>
    <property type="match status" value="1"/>
</dbReference>
<dbReference type="FunFam" id="3.10.200.10:FF:000002">
    <property type="entry name" value="Carbonic anhydrase-related protein 10"/>
    <property type="match status" value="1"/>
</dbReference>
<dbReference type="Gene3D" id="3.10.200.10">
    <property type="entry name" value="Alpha carbonic anhydrase"/>
    <property type="match status" value="1"/>
</dbReference>
<dbReference type="InterPro" id="IPR041878">
    <property type="entry name" value="Alpha_CARP_X/XI"/>
</dbReference>
<dbReference type="InterPro" id="IPR001148">
    <property type="entry name" value="CA_dom"/>
</dbReference>
<dbReference type="InterPro" id="IPR036398">
    <property type="entry name" value="CA_dom_sf"/>
</dbReference>
<dbReference type="InterPro" id="IPR023561">
    <property type="entry name" value="Carbonic_anhydrase_a-class"/>
</dbReference>
<dbReference type="PANTHER" id="PTHR18952">
    <property type="entry name" value="CARBONIC ANHYDRASE"/>
    <property type="match status" value="1"/>
</dbReference>
<dbReference type="PANTHER" id="PTHR18952:SF91">
    <property type="entry name" value="CARBONIC ANHYDRASE-RELATED PROTEIN 10"/>
    <property type="match status" value="1"/>
</dbReference>
<dbReference type="Pfam" id="PF00194">
    <property type="entry name" value="Carb_anhydrase"/>
    <property type="match status" value="1"/>
</dbReference>
<dbReference type="SMART" id="SM01057">
    <property type="entry name" value="Carb_anhydrase"/>
    <property type="match status" value="1"/>
</dbReference>
<dbReference type="SUPFAM" id="SSF51069">
    <property type="entry name" value="Carbonic anhydrase"/>
    <property type="match status" value="1"/>
</dbReference>
<dbReference type="PROSITE" id="PS51144">
    <property type="entry name" value="ALPHA_CA_2"/>
    <property type="match status" value="1"/>
</dbReference>
<feature type="chain" id="PRO_0000077436" description="Carbonic anhydrase-related protein 10">
    <location>
        <begin position="1"/>
        <end position="328"/>
    </location>
</feature>
<feature type="domain" description="Alpha-carbonic anhydrase" evidence="1">
    <location>
        <begin position="31"/>
        <end position="301"/>
    </location>
</feature>
<feature type="splice variant" id="VSP_056940" description="In isoform 2." evidence="3">
    <location>
        <begin position="1"/>
        <end position="75"/>
    </location>
</feature>
<name>CAH10_HUMAN</name>
<organism>
    <name type="scientific">Homo sapiens</name>
    <name type="common">Human</name>
    <dbReference type="NCBI Taxonomy" id="9606"/>
    <lineage>
        <taxon>Eukaryota</taxon>
        <taxon>Metazoa</taxon>
        <taxon>Chordata</taxon>
        <taxon>Craniata</taxon>
        <taxon>Vertebrata</taxon>
        <taxon>Euteleostomi</taxon>
        <taxon>Mammalia</taxon>
        <taxon>Eutheria</taxon>
        <taxon>Euarchontoglires</taxon>
        <taxon>Primates</taxon>
        <taxon>Haplorrhini</taxon>
        <taxon>Catarrhini</taxon>
        <taxon>Hominidae</taxon>
        <taxon>Homo</taxon>
    </lineage>
</organism>
<proteinExistence type="evidence at protein level"/>